<feature type="signal peptide" evidence="1">
    <location>
        <begin position="1"/>
        <end position="26"/>
    </location>
</feature>
<feature type="propeptide" id="PRO_0000453662" evidence="5">
    <location>
        <begin position="27"/>
        <end position="46"/>
    </location>
</feature>
<feature type="peptide" id="PRO_5003024362" description="Venom peptide 6" evidence="5">
    <location>
        <begin position="47"/>
        <end position="62"/>
    </location>
</feature>
<feature type="repeat" description="AXPX 1" evidence="4">
    <location>
        <begin position="26"/>
        <end position="29"/>
    </location>
</feature>
<feature type="repeat" description="AXPX 2" evidence="4">
    <location>
        <begin position="30"/>
        <end position="33"/>
    </location>
</feature>
<feature type="repeat" description="AXPX 3" evidence="4">
    <location>
        <begin position="40"/>
        <end position="43"/>
    </location>
</feature>
<keyword id="KW-0044">Antibiotic</keyword>
<keyword id="KW-0929">Antimicrobial</keyword>
<keyword id="KW-0204">Cytolysis</keyword>
<keyword id="KW-0295">Fungicide</keyword>
<keyword id="KW-0391">Immunity</keyword>
<keyword id="KW-0399">Innate immunity</keyword>
<keyword id="KW-0472">Membrane</keyword>
<keyword id="KW-0677">Repeat</keyword>
<keyword id="KW-0964">Secreted</keyword>
<keyword id="KW-0732">Signal</keyword>
<keyword id="KW-1052">Target cell membrane</keyword>
<keyword id="KW-1053">Target membrane</keyword>
<keyword id="KW-0800">Toxin</keyword>
<sequence length="62" mass="6286">MKSTSVFILFAGIAIMACLQMTGTEAAPSASPNPTPVARADPDPEAFGPVIGLLSGILKSLL</sequence>
<organism>
    <name type="scientific">Eumenes pomiformis</name>
    <name type="common">Potter wasp</name>
    <name type="synonym">Vespa pomiformis</name>
    <dbReference type="NCBI Taxonomy" id="693051"/>
    <lineage>
        <taxon>Eukaryota</taxon>
        <taxon>Metazoa</taxon>
        <taxon>Ecdysozoa</taxon>
        <taxon>Arthropoda</taxon>
        <taxon>Hexapoda</taxon>
        <taxon>Insecta</taxon>
        <taxon>Pterygota</taxon>
        <taxon>Neoptera</taxon>
        <taxon>Endopterygota</taxon>
        <taxon>Hymenoptera</taxon>
        <taxon>Apocrita</taxon>
        <taxon>Aculeata</taxon>
        <taxon>Vespoidea</taxon>
        <taxon>Vespidae</taxon>
        <taxon>Eumeninae</taxon>
        <taxon>Eumenes</taxon>
    </lineage>
</organism>
<protein>
    <recommendedName>
        <fullName evidence="3">Venom peptide 6</fullName>
        <shortName evidence="3">EpVP6</shortName>
        <shortName evidence="6">VP6</shortName>
    </recommendedName>
    <alternativeName>
        <fullName evidence="4">Protonectin VP6</fullName>
    </alternativeName>
</protein>
<accession>D1MEJ3</accession>
<reference key="1">
    <citation type="journal article" date="2010" name="Toxicon">
        <title>Differential gene expression profiles in the venom gland/sac of Eumenes pomiformis (Hymenoptera: Eumenidae).</title>
        <authorList>
            <person name="Baek J.H."/>
            <person name="Lee S.H."/>
        </authorList>
    </citation>
    <scope>NUCLEOTIDE SEQUENCE [MRNA]</scope>
    <source>
        <tissue>Venom gland</tissue>
    </source>
</reference>
<reference key="2">
    <citation type="journal article" date="2011" name="Peptides">
        <title>Venom peptides from solitary hunting wasps induce feeding disorder in lepidopteran larvae.</title>
        <authorList>
            <person name="Baek J.H."/>
            <person name="Ji Y."/>
            <person name="Shin J.S."/>
            <person name="Lee S."/>
            <person name="Lee S.H."/>
        </authorList>
    </citation>
    <scope>FUNCTION</scope>
    <scope>SYNTHESIS OF 47-62</scope>
</reference>
<comment type="function">
    <text evidence="2">Antimicrobial peptide with strong activity against the fungus B.cinerea (MIC=5 uM) and the Gram-positive bacterium S.aureus (MIC=50 uM), and no activity against C.albicans (MIC&gt;200 uM), and the Gram-negative bacterium E.coli (MIC&gt;200 uM) (PubMed:21184791). Shows cytolytic activity against insect cell lines (PubMed:21184791). Has no hemolytic activity against human erythrocytes (PubMed:21184791). In vivo, peptide injection in the vicinity of the head and thorax of lepidopteran larvae induces feeding disorder that lasts one or two days before recovering (PubMed:21184791).</text>
</comment>
<comment type="subcellular location">
    <subcellularLocation>
        <location evidence="5">Secreted</location>
    </subcellularLocation>
    <subcellularLocation>
        <location evidence="4">Target cell membrane</location>
    </subcellularLocation>
    <text evidence="4">Assumes an amphipathic alpha-helical conformation in a membrane-like environment.</text>
</comment>
<comment type="tissue specificity">
    <text evidence="5">Expressed by the venom gland.</text>
</comment>
<comment type="miscellaneous">
    <text evidence="5">Not found in venom, suggesting that it is a minor component.</text>
</comment>
<comment type="similarity">
    <text evidence="4">Belongs to the MCD family.</text>
</comment>
<evidence type="ECO:0000255" key="1"/>
<evidence type="ECO:0000269" key="2">
    <source>
    </source>
</evidence>
<evidence type="ECO:0000303" key="3">
    <source>
    </source>
</evidence>
<evidence type="ECO:0000305" key="4"/>
<evidence type="ECO:0000305" key="5">
    <source>
    </source>
</evidence>
<evidence type="ECO:0000312" key="6">
    <source>
        <dbReference type="EMBL" id="ACZ37399.1"/>
    </source>
</evidence>
<proteinExistence type="inferred from homology"/>
<name>PROT6_EUMPO</name>
<dbReference type="EMBL" id="GU136238">
    <property type="protein sequence ID" value="ACZ37399.1"/>
    <property type="molecule type" value="mRNA"/>
</dbReference>
<dbReference type="GO" id="GO:0005576">
    <property type="term" value="C:extracellular region"/>
    <property type="evidence" value="ECO:0007669"/>
    <property type="project" value="UniProtKB-SubCell"/>
</dbReference>
<dbReference type="GO" id="GO:0016020">
    <property type="term" value="C:membrane"/>
    <property type="evidence" value="ECO:0007669"/>
    <property type="project" value="UniProtKB-KW"/>
</dbReference>
<dbReference type="GO" id="GO:0044218">
    <property type="term" value="C:other organism cell membrane"/>
    <property type="evidence" value="ECO:0007669"/>
    <property type="project" value="UniProtKB-KW"/>
</dbReference>
<dbReference type="GO" id="GO:0090729">
    <property type="term" value="F:toxin activity"/>
    <property type="evidence" value="ECO:0007669"/>
    <property type="project" value="UniProtKB-KW"/>
</dbReference>
<dbReference type="GO" id="GO:0042742">
    <property type="term" value="P:defense response to bacterium"/>
    <property type="evidence" value="ECO:0007669"/>
    <property type="project" value="UniProtKB-KW"/>
</dbReference>
<dbReference type="GO" id="GO:0050832">
    <property type="term" value="P:defense response to fungus"/>
    <property type="evidence" value="ECO:0007669"/>
    <property type="project" value="UniProtKB-KW"/>
</dbReference>
<dbReference type="GO" id="GO:0045087">
    <property type="term" value="P:innate immune response"/>
    <property type="evidence" value="ECO:0007669"/>
    <property type="project" value="UniProtKB-KW"/>
</dbReference>
<dbReference type="GO" id="GO:0031640">
    <property type="term" value="P:killing of cells of another organism"/>
    <property type="evidence" value="ECO:0007669"/>
    <property type="project" value="UniProtKB-KW"/>
</dbReference>